<proteinExistence type="inferred from homology"/>
<dbReference type="EMBL" id="CP000112">
    <property type="protein sequence ID" value="ABB37834.1"/>
    <property type="molecule type" value="Genomic_DNA"/>
</dbReference>
<dbReference type="RefSeq" id="WP_011367071.1">
    <property type="nucleotide sequence ID" value="NC_007519.1"/>
</dbReference>
<dbReference type="SMR" id="Q313R2"/>
<dbReference type="STRING" id="207559.Dde_1033"/>
<dbReference type="KEGG" id="dde:Dde_1033"/>
<dbReference type="eggNOG" id="COG2001">
    <property type="taxonomic scope" value="Bacteria"/>
</dbReference>
<dbReference type="HOGENOM" id="CLU_107907_2_2_7"/>
<dbReference type="Proteomes" id="UP000002710">
    <property type="component" value="Chromosome"/>
</dbReference>
<dbReference type="GO" id="GO:0005737">
    <property type="term" value="C:cytoplasm"/>
    <property type="evidence" value="ECO:0007669"/>
    <property type="project" value="UniProtKB-UniRule"/>
</dbReference>
<dbReference type="GO" id="GO:0009295">
    <property type="term" value="C:nucleoid"/>
    <property type="evidence" value="ECO:0007669"/>
    <property type="project" value="UniProtKB-SubCell"/>
</dbReference>
<dbReference type="GO" id="GO:0003700">
    <property type="term" value="F:DNA-binding transcription factor activity"/>
    <property type="evidence" value="ECO:0007669"/>
    <property type="project" value="UniProtKB-UniRule"/>
</dbReference>
<dbReference type="GO" id="GO:0000976">
    <property type="term" value="F:transcription cis-regulatory region binding"/>
    <property type="evidence" value="ECO:0007669"/>
    <property type="project" value="TreeGrafter"/>
</dbReference>
<dbReference type="GO" id="GO:2000143">
    <property type="term" value="P:negative regulation of DNA-templated transcription initiation"/>
    <property type="evidence" value="ECO:0007669"/>
    <property type="project" value="TreeGrafter"/>
</dbReference>
<dbReference type="CDD" id="cd16321">
    <property type="entry name" value="MraZ_C"/>
    <property type="match status" value="1"/>
</dbReference>
<dbReference type="CDD" id="cd16320">
    <property type="entry name" value="MraZ_N"/>
    <property type="match status" value="1"/>
</dbReference>
<dbReference type="Gene3D" id="3.40.1550.20">
    <property type="entry name" value="Transcriptional regulator MraZ domain"/>
    <property type="match status" value="1"/>
</dbReference>
<dbReference type="HAMAP" id="MF_01008">
    <property type="entry name" value="MraZ"/>
    <property type="match status" value="1"/>
</dbReference>
<dbReference type="InterPro" id="IPR003444">
    <property type="entry name" value="MraZ"/>
</dbReference>
<dbReference type="InterPro" id="IPR035644">
    <property type="entry name" value="MraZ_C"/>
</dbReference>
<dbReference type="InterPro" id="IPR020603">
    <property type="entry name" value="MraZ_dom"/>
</dbReference>
<dbReference type="InterPro" id="IPR035642">
    <property type="entry name" value="MraZ_N"/>
</dbReference>
<dbReference type="InterPro" id="IPR038619">
    <property type="entry name" value="MraZ_sf"/>
</dbReference>
<dbReference type="InterPro" id="IPR007159">
    <property type="entry name" value="SpoVT-AbrB_dom"/>
</dbReference>
<dbReference type="InterPro" id="IPR037914">
    <property type="entry name" value="SpoVT-AbrB_sf"/>
</dbReference>
<dbReference type="PANTHER" id="PTHR34701">
    <property type="entry name" value="TRANSCRIPTIONAL REGULATOR MRAZ"/>
    <property type="match status" value="1"/>
</dbReference>
<dbReference type="PANTHER" id="PTHR34701:SF1">
    <property type="entry name" value="TRANSCRIPTIONAL REGULATOR MRAZ"/>
    <property type="match status" value="1"/>
</dbReference>
<dbReference type="Pfam" id="PF02381">
    <property type="entry name" value="MraZ"/>
    <property type="match status" value="2"/>
</dbReference>
<dbReference type="SUPFAM" id="SSF89447">
    <property type="entry name" value="AbrB/MazE/MraZ-like"/>
    <property type="match status" value="1"/>
</dbReference>
<dbReference type="PROSITE" id="PS51740">
    <property type="entry name" value="SPOVT_ABRB"/>
    <property type="match status" value="2"/>
</dbReference>
<keyword id="KW-0963">Cytoplasm</keyword>
<keyword id="KW-0238">DNA-binding</keyword>
<keyword id="KW-1185">Reference proteome</keyword>
<keyword id="KW-0677">Repeat</keyword>
<keyword id="KW-0804">Transcription</keyword>
<keyword id="KW-0805">Transcription regulation</keyword>
<sequence length="149" mass="16728">MSFKGRSYRSLDPKGRLMLPPEVRDALLAVSPEGRVSLTTFDGCLVAYTPEDWEKFEAGFARIKNPSRKMRDFRRLVIGGVEELCVDKQGRVKLSRAHMEYAGITKKVVIVGQGSRFEIWSEEELEAVIGQDFGDVTDELAESGVDFPI</sequence>
<organism>
    <name type="scientific">Oleidesulfovibrio alaskensis (strain ATCC BAA-1058 / DSM 17464 / G20)</name>
    <name type="common">Desulfovibrio alaskensis</name>
    <dbReference type="NCBI Taxonomy" id="207559"/>
    <lineage>
        <taxon>Bacteria</taxon>
        <taxon>Pseudomonadati</taxon>
        <taxon>Thermodesulfobacteriota</taxon>
        <taxon>Desulfovibrionia</taxon>
        <taxon>Desulfovibrionales</taxon>
        <taxon>Desulfovibrionaceae</taxon>
        <taxon>Oleidesulfovibrio</taxon>
    </lineage>
</organism>
<reference key="1">
    <citation type="journal article" date="2011" name="J. Bacteriol.">
        <title>Complete genome sequence and updated annotation of Desulfovibrio alaskensis G20.</title>
        <authorList>
            <person name="Hauser L.J."/>
            <person name="Land M.L."/>
            <person name="Brown S.D."/>
            <person name="Larimer F."/>
            <person name="Keller K.L."/>
            <person name="Rapp-Giles B.J."/>
            <person name="Price M.N."/>
            <person name="Lin M."/>
            <person name="Bruce D.C."/>
            <person name="Detter J.C."/>
            <person name="Tapia R."/>
            <person name="Han C.S."/>
            <person name="Goodwin L.A."/>
            <person name="Cheng J.F."/>
            <person name="Pitluck S."/>
            <person name="Copeland A."/>
            <person name="Lucas S."/>
            <person name="Nolan M."/>
            <person name="Lapidus A.L."/>
            <person name="Palumbo A.V."/>
            <person name="Wall J.D."/>
        </authorList>
    </citation>
    <scope>NUCLEOTIDE SEQUENCE [LARGE SCALE GENOMIC DNA]</scope>
    <source>
        <strain>ATCC BAA-1058 / DSM 17464 / G20</strain>
    </source>
</reference>
<comment type="subunit">
    <text evidence="1">Forms oligomers.</text>
</comment>
<comment type="subcellular location">
    <subcellularLocation>
        <location evidence="1">Cytoplasm</location>
        <location evidence="1">Nucleoid</location>
    </subcellularLocation>
</comment>
<comment type="similarity">
    <text evidence="1">Belongs to the MraZ family.</text>
</comment>
<evidence type="ECO:0000255" key="1">
    <source>
        <dbReference type="HAMAP-Rule" id="MF_01008"/>
    </source>
</evidence>
<evidence type="ECO:0000255" key="2">
    <source>
        <dbReference type="PROSITE-ProRule" id="PRU01076"/>
    </source>
</evidence>
<feature type="chain" id="PRO_0000230085" description="Transcriptional regulator MraZ">
    <location>
        <begin position="1"/>
        <end position="149"/>
    </location>
</feature>
<feature type="domain" description="SpoVT-AbrB 1" evidence="2">
    <location>
        <begin position="6"/>
        <end position="52"/>
    </location>
</feature>
<feature type="domain" description="SpoVT-AbrB 2" evidence="2">
    <location>
        <begin position="81"/>
        <end position="124"/>
    </location>
</feature>
<protein>
    <recommendedName>
        <fullName>Transcriptional regulator MraZ</fullName>
    </recommendedName>
</protein>
<accession>Q313R2</accession>
<name>MRAZ_OLEA2</name>
<gene>
    <name evidence="1" type="primary">mraZ</name>
    <name type="ordered locus">Dde_1033</name>
</gene>